<protein>
    <recommendedName>
        <fullName evidence="1">Large ribosomal subunit protein uL14c</fullName>
    </recommendedName>
    <alternativeName>
        <fullName evidence="2">50S ribosomal protein L14, chloroplastic</fullName>
    </alternativeName>
</protein>
<proteinExistence type="inferred from homology"/>
<keyword id="KW-0150">Chloroplast</keyword>
<keyword id="KW-0934">Plastid</keyword>
<keyword id="KW-0687">Ribonucleoprotein</keyword>
<keyword id="KW-0689">Ribosomal protein</keyword>
<keyword id="KW-0694">RNA-binding</keyword>
<keyword id="KW-0699">rRNA-binding</keyword>
<gene>
    <name evidence="1" type="primary">rpl14</name>
</gene>
<dbReference type="EMBL" id="EF115541">
    <property type="protein sequence ID" value="ABK79448.1"/>
    <property type="molecule type" value="Genomic_DNA"/>
</dbReference>
<dbReference type="RefSeq" id="YP_010144461.1">
    <property type="nucleotide sequence ID" value="NC_056985.1"/>
</dbReference>
<dbReference type="RefSeq" id="YP_874689.1">
    <property type="nucleotide sequence ID" value="NC_008590.1"/>
</dbReference>
<dbReference type="SMR" id="A1E9M7"/>
<dbReference type="GeneID" id="4525111"/>
<dbReference type="GeneID" id="67140695"/>
<dbReference type="OMA" id="MARELMC"/>
<dbReference type="GO" id="GO:0009507">
    <property type="term" value="C:chloroplast"/>
    <property type="evidence" value="ECO:0007669"/>
    <property type="project" value="UniProtKB-SubCell"/>
</dbReference>
<dbReference type="GO" id="GO:0022625">
    <property type="term" value="C:cytosolic large ribosomal subunit"/>
    <property type="evidence" value="ECO:0007669"/>
    <property type="project" value="TreeGrafter"/>
</dbReference>
<dbReference type="GO" id="GO:0070180">
    <property type="term" value="F:large ribosomal subunit rRNA binding"/>
    <property type="evidence" value="ECO:0007669"/>
    <property type="project" value="TreeGrafter"/>
</dbReference>
<dbReference type="GO" id="GO:0003735">
    <property type="term" value="F:structural constituent of ribosome"/>
    <property type="evidence" value="ECO:0007669"/>
    <property type="project" value="InterPro"/>
</dbReference>
<dbReference type="GO" id="GO:0006412">
    <property type="term" value="P:translation"/>
    <property type="evidence" value="ECO:0007669"/>
    <property type="project" value="UniProtKB-UniRule"/>
</dbReference>
<dbReference type="CDD" id="cd00337">
    <property type="entry name" value="Ribosomal_uL14"/>
    <property type="match status" value="1"/>
</dbReference>
<dbReference type="FunFam" id="2.40.150.20:FF:000002">
    <property type="entry name" value="50S ribosomal protein L14, chloroplastic"/>
    <property type="match status" value="1"/>
</dbReference>
<dbReference type="Gene3D" id="2.40.150.20">
    <property type="entry name" value="Ribosomal protein L14"/>
    <property type="match status" value="1"/>
</dbReference>
<dbReference type="HAMAP" id="MF_01367">
    <property type="entry name" value="Ribosomal_uL14"/>
    <property type="match status" value="1"/>
</dbReference>
<dbReference type="InterPro" id="IPR000218">
    <property type="entry name" value="Ribosomal_uL14"/>
</dbReference>
<dbReference type="InterPro" id="IPR005745">
    <property type="entry name" value="Ribosomal_uL14_bac-type"/>
</dbReference>
<dbReference type="InterPro" id="IPR019972">
    <property type="entry name" value="Ribosomal_uL14_CS"/>
</dbReference>
<dbReference type="InterPro" id="IPR036853">
    <property type="entry name" value="Ribosomal_uL14_sf"/>
</dbReference>
<dbReference type="NCBIfam" id="TIGR01067">
    <property type="entry name" value="rplN_bact"/>
    <property type="match status" value="1"/>
</dbReference>
<dbReference type="PANTHER" id="PTHR11761">
    <property type="entry name" value="50S/60S RIBOSOMAL PROTEIN L14/L23"/>
    <property type="match status" value="1"/>
</dbReference>
<dbReference type="PANTHER" id="PTHR11761:SF3">
    <property type="entry name" value="LARGE RIBOSOMAL SUBUNIT PROTEIN UL14M"/>
    <property type="match status" value="1"/>
</dbReference>
<dbReference type="Pfam" id="PF00238">
    <property type="entry name" value="Ribosomal_L14"/>
    <property type="match status" value="1"/>
</dbReference>
<dbReference type="SMART" id="SM01374">
    <property type="entry name" value="Ribosomal_L14"/>
    <property type="match status" value="1"/>
</dbReference>
<dbReference type="SUPFAM" id="SSF50193">
    <property type="entry name" value="Ribosomal protein L14"/>
    <property type="match status" value="1"/>
</dbReference>
<dbReference type="PROSITE" id="PS00049">
    <property type="entry name" value="RIBOSOMAL_L14"/>
    <property type="match status" value="1"/>
</dbReference>
<sequence length="123" mass="13549">MIQPQTLLNVADNSGARKLMCIRVIGAAGNQRYARIGDVIVAVIKDALPQMPLERSEVIRAVIVRTCKEFKCEDGIIIRYDDNAAVIIDQKGNPKGTRVFGAIAEELRELNFTKIVSLAPEVL</sequence>
<geneLocation type="chloroplast"/>
<reference key="1">
    <citation type="journal article" date="2007" name="Theor. Appl. Genet.">
        <title>Complete chloroplast genome sequences of Hordeum vulgare, Sorghum bicolor and Agrostis stolonifera, and comparative analyses with other grass genomes.</title>
        <authorList>
            <person name="Saski C."/>
            <person name="Lee S.-B."/>
            <person name="Fjellheim S."/>
            <person name="Guda C."/>
            <person name="Jansen R.K."/>
            <person name="Luo H."/>
            <person name="Tomkins J."/>
            <person name="Rognli O.A."/>
            <person name="Daniell H."/>
            <person name="Clarke J.L."/>
        </authorList>
    </citation>
    <scope>NUCLEOTIDE SEQUENCE [LARGE SCALE GENOMIC DNA]</scope>
    <source>
        <strain>cv. Morex</strain>
    </source>
</reference>
<organism>
    <name type="scientific">Hordeum vulgare</name>
    <name type="common">Barley</name>
    <dbReference type="NCBI Taxonomy" id="4513"/>
    <lineage>
        <taxon>Eukaryota</taxon>
        <taxon>Viridiplantae</taxon>
        <taxon>Streptophyta</taxon>
        <taxon>Embryophyta</taxon>
        <taxon>Tracheophyta</taxon>
        <taxon>Spermatophyta</taxon>
        <taxon>Magnoliopsida</taxon>
        <taxon>Liliopsida</taxon>
        <taxon>Poales</taxon>
        <taxon>Poaceae</taxon>
        <taxon>BOP clade</taxon>
        <taxon>Pooideae</taxon>
        <taxon>Triticodae</taxon>
        <taxon>Triticeae</taxon>
        <taxon>Hordeinae</taxon>
        <taxon>Hordeum</taxon>
    </lineage>
</organism>
<accession>A1E9M7</accession>
<evidence type="ECO:0000255" key="1">
    <source>
        <dbReference type="HAMAP-Rule" id="MF_01367"/>
    </source>
</evidence>
<evidence type="ECO:0000305" key="2"/>
<feature type="chain" id="PRO_0000355882" description="Large ribosomal subunit protein uL14c">
    <location>
        <begin position="1"/>
        <end position="123"/>
    </location>
</feature>
<comment type="function">
    <text evidence="1">Binds to 23S rRNA.</text>
</comment>
<comment type="subunit">
    <text evidence="1">Part of the 50S ribosomal subunit.</text>
</comment>
<comment type="subcellular location">
    <subcellularLocation>
        <location>Plastid</location>
        <location>Chloroplast</location>
    </subcellularLocation>
</comment>
<comment type="similarity">
    <text evidence="1">Belongs to the universal ribosomal protein uL14 family.</text>
</comment>
<name>RK14_HORVU</name>